<feature type="chain" id="PRO_0000368635" description="ATP synthase subunit b">
    <location>
        <begin position="1"/>
        <end position="190"/>
    </location>
</feature>
<feature type="transmembrane region" description="Helical" evidence="1">
    <location>
        <begin position="34"/>
        <end position="54"/>
    </location>
</feature>
<comment type="function">
    <text evidence="1">F(1)F(0) ATP synthase produces ATP from ADP in the presence of a proton or sodium gradient. F-type ATPases consist of two structural domains, F(1) containing the extramembraneous catalytic core and F(0) containing the membrane proton channel, linked together by a central stalk and a peripheral stalk. During catalysis, ATP synthesis in the catalytic domain of F(1) is coupled via a rotary mechanism of the central stalk subunits to proton translocation.</text>
</comment>
<comment type="function">
    <text evidence="1">Component of the F(0) channel, it forms part of the peripheral stalk, linking F(1) to F(0).</text>
</comment>
<comment type="subunit">
    <text evidence="1">F-type ATPases have 2 components, F(1) - the catalytic core - and F(0) - the membrane proton channel. F(1) has five subunits: alpha(3), beta(3), gamma(1), delta(1), epsilon(1). F(0) has four main subunits: a(1), b(1), b'(1) and c(10-14). The alpha and beta chains form an alternating ring which encloses part of the gamma chain. F(1) is attached to F(0) by a central stalk formed by the gamma and epsilon chains, while a peripheral stalk is formed by the delta, b and b' chains.</text>
</comment>
<comment type="subcellular location">
    <subcellularLocation>
        <location evidence="1">Cellular thylakoid membrane</location>
        <topology evidence="1">Single-pass membrane protein</topology>
    </subcellularLocation>
</comment>
<comment type="similarity">
    <text evidence="1">Belongs to the ATPase B chain family.</text>
</comment>
<sequence length="190" mass="20423">MGIMGTFLLLAAEANAVHSELAEGAAEGGFGLNLDIFETNLINLAILVGILFYFGRKVLSNILNERQSNIATAIQEAEGRLKEAKTALSQAQEQLKQSQAEAERIRQSAVENAQKAKEALLAKAVQDVERLKQTAAADLNTETERAIAQLRQRVATLALQKVESQLKGGIADDAQQSLIDRSIAQLGGNV</sequence>
<keyword id="KW-0066">ATP synthesis</keyword>
<keyword id="KW-0138">CF(0)</keyword>
<keyword id="KW-0375">Hydrogen ion transport</keyword>
<keyword id="KW-0406">Ion transport</keyword>
<keyword id="KW-0472">Membrane</keyword>
<keyword id="KW-1185">Reference proteome</keyword>
<keyword id="KW-0793">Thylakoid</keyword>
<keyword id="KW-0812">Transmembrane</keyword>
<keyword id="KW-1133">Transmembrane helix</keyword>
<keyword id="KW-0813">Transport</keyword>
<dbReference type="EMBL" id="CP001037">
    <property type="protein sequence ID" value="ACC83208.1"/>
    <property type="molecule type" value="Genomic_DNA"/>
</dbReference>
<dbReference type="RefSeq" id="WP_012411164.1">
    <property type="nucleotide sequence ID" value="NC_010628.1"/>
</dbReference>
<dbReference type="SMR" id="B2J056"/>
<dbReference type="STRING" id="63737.Npun_F4861"/>
<dbReference type="EnsemblBacteria" id="ACC83208">
    <property type="protein sequence ID" value="ACC83208"/>
    <property type="gene ID" value="Npun_F4861"/>
</dbReference>
<dbReference type="KEGG" id="npu:Npun_F4861"/>
<dbReference type="eggNOG" id="COG0711">
    <property type="taxonomic scope" value="Bacteria"/>
</dbReference>
<dbReference type="HOGENOM" id="CLU_079215_8_1_3"/>
<dbReference type="OrthoDB" id="461217at2"/>
<dbReference type="PhylomeDB" id="B2J056"/>
<dbReference type="Proteomes" id="UP000001191">
    <property type="component" value="Chromosome"/>
</dbReference>
<dbReference type="GO" id="GO:0031676">
    <property type="term" value="C:plasma membrane-derived thylakoid membrane"/>
    <property type="evidence" value="ECO:0007669"/>
    <property type="project" value="UniProtKB-SubCell"/>
</dbReference>
<dbReference type="GO" id="GO:0045259">
    <property type="term" value="C:proton-transporting ATP synthase complex"/>
    <property type="evidence" value="ECO:0007669"/>
    <property type="project" value="UniProtKB-KW"/>
</dbReference>
<dbReference type="GO" id="GO:0046933">
    <property type="term" value="F:proton-transporting ATP synthase activity, rotational mechanism"/>
    <property type="evidence" value="ECO:0007669"/>
    <property type="project" value="UniProtKB-UniRule"/>
</dbReference>
<dbReference type="CDD" id="cd06503">
    <property type="entry name" value="ATP-synt_Fo_b"/>
    <property type="match status" value="1"/>
</dbReference>
<dbReference type="HAMAP" id="MF_01398">
    <property type="entry name" value="ATP_synth_b_bprime"/>
    <property type="match status" value="1"/>
</dbReference>
<dbReference type="InterPro" id="IPR028987">
    <property type="entry name" value="ATP_synth_B-like_membr_sf"/>
</dbReference>
<dbReference type="InterPro" id="IPR002146">
    <property type="entry name" value="ATP_synth_b/b'su_bac/chlpt"/>
</dbReference>
<dbReference type="InterPro" id="IPR005864">
    <property type="entry name" value="ATP_synth_F0_bsu_bac"/>
</dbReference>
<dbReference type="NCBIfam" id="TIGR01144">
    <property type="entry name" value="ATP_synt_b"/>
    <property type="match status" value="1"/>
</dbReference>
<dbReference type="NCBIfam" id="NF005606">
    <property type="entry name" value="PRK07352.1"/>
    <property type="match status" value="1"/>
</dbReference>
<dbReference type="PANTHER" id="PTHR34264">
    <property type="entry name" value="ATP SYNTHASE SUBUNIT B, CHLOROPLASTIC"/>
    <property type="match status" value="1"/>
</dbReference>
<dbReference type="PANTHER" id="PTHR34264:SF3">
    <property type="entry name" value="ATP SYNTHASE SUBUNIT B, CHLOROPLASTIC"/>
    <property type="match status" value="1"/>
</dbReference>
<dbReference type="Pfam" id="PF00430">
    <property type="entry name" value="ATP-synt_B"/>
    <property type="match status" value="1"/>
</dbReference>
<dbReference type="SUPFAM" id="SSF81573">
    <property type="entry name" value="F1F0 ATP synthase subunit B, membrane domain"/>
    <property type="match status" value="1"/>
</dbReference>
<name>ATPF_NOSP7</name>
<reference key="1">
    <citation type="journal article" date="2013" name="Plant Physiol.">
        <title>A Nostoc punctiforme Sugar Transporter Necessary to Establish a Cyanobacterium-Plant Symbiosis.</title>
        <authorList>
            <person name="Ekman M."/>
            <person name="Picossi S."/>
            <person name="Campbell E.L."/>
            <person name="Meeks J.C."/>
            <person name="Flores E."/>
        </authorList>
    </citation>
    <scope>NUCLEOTIDE SEQUENCE [LARGE SCALE GENOMIC DNA]</scope>
    <source>
        <strain>ATCC 29133 / PCC 73102</strain>
    </source>
</reference>
<proteinExistence type="inferred from homology"/>
<accession>B2J056</accession>
<evidence type="ECO:0000255" key="1">
    <source>
        <dbReference type="HAMAP-Rule" id="MF_01398"/>
    </source>
</evidence>
<organism>
    <name type="scientific">Nostoc punctiforme (strain ATCC 29133 / PCC 73102)</name>
    <dbReference type="NCBI Taxonomy" id="63737"/>
    <lineage>
        <taxon>Bacteria</taxon>
        <taxon>Bacillati</taxon>
        <taxon>Cyanobacteriota</taxon>
        <taxon>Cyanophyceae</taxon>
        <taxon>Nostocales</taxon>
        <taxon>Nostocaceae</taxon>
        <taxon>Nostoc</taxon>
    </lineage>
</organism>
<protein>
    <recommendedName>
        <fullName evidence="1">ATP synthase subunit b</fullName>
    </recommendedName>
    <alternativeName>
        <fullName evidence="1">ATP synthase F(0) sector subunit b</fullName>
    </alternativeName>
    <alternativeName>
        <fullName evidence="1">ATPase subunit I</fullName>
    </alternativeName>
    <alternativeName>
        <fullName evidence="1">F-type ATPase subunit b</fullName>
        <shortName evidence="1">F-ATPase subunit b</shortName>
    </alternativeName>
</protein>
<gene>
    <name evidence="1" type="primary">atpF</name>
    <name type="ordered locus">Npun_F4861</name>
</gene>